<dbReference type="EMBL" id="AY653733">
    <property type="protein sequence ID" value="AAV50653.1"/>
    <property type="molecule type" value="Genomic_DNA"/>
</dbReference>
<dbReference type="SMR" id="Q5UQW9"/>
<dbReference type="KEGG" id="vg:9925006"/>
<dbReference type="OrthoDB" id="25955at10239"/>
<dbReference type="Proteomes" id="UP000001134">
    <property type="component" value="Genome"/>
</dbReference>
<feature type="chain" id="PRO_0000071275" description="Uncharacterized protein L384">
    <location>
        <begin position="1"/>
        <end position="132"/>
    </location>
</feature>
<proteinExistence type="predicted"/>
<accession>Q5UQW9</accession>
<keyword id="KW-1185">Reference proteome</keyword>
<sequence>MTSSTSLKTYVTDKELGGITTPYIIDIIKSIKQIQQRMKDPEIASLEYIKMYDVLGKEFYHFSERHTKIFTEVLQKKNLNTVVSVLYYKDKVEKGELTEEQLQNMLAEKYLPKHLKEEADSRIKEMKERGEI</sequence>
<organismHost>
    <name type="scientific">Acanthamoeba polyphaga</name>
    <name type="common">Amoeba</name>
    <dbReference type="NCBI Taxonomy" id="5757"/>
</organismHost>
<organism>
    <name type="scientific">Acanthamoeba polyphaga mimivirus</name>
    <name type="common">APMV</name>
    <dbReference type="NCBI Taxonomy" id="212035"/>
    <lineage>
        <taxon>Viruses</taxon>
        <taxon>Varidnaviria</taxon>
        <taxon>Bamfordvirae</taxon>
        <taxon>Nucleocytoviricota</taxon>
        <taxon>Megaviricetes</taxon>
        <taxon>Imitervirales</taxon>
        <taxon>Mimiviridae</taxon>
        <taxon>Megamimivirinae</taxon>
        <taxon>Mimivirus</taxon>
        <taxon>Mimivirus bradfordmassiliense</taxon>
    </lineage>
</organism>
<gene>
    <name type="ordered locus">MIMI_L384</name>
</gene>
<name>YL384_MIMIV</name>
<protein>
    <recommendedName>
        <fullName>Uncharacterized protein L384</fullName>
    </recommendedName>
</protein>
<reference key="1">
    <citation type="journal article" date="2004" name="Science">
        <title>The 1.2-megabase genome sequence of Mimivirus.</title>
        <authorList>
            <person name="Raoult D."/>
            <person name="Audic S."/>
            <person name="Robert C."/>
            <person name="Abergel C."/>
            <person name="Renesto P."/>
            <person name="Ogata H."/>
            <person name="La Scola B."/>
            <person name="Susan M."/>
            <person name="Claverie J.-M."/>
        </authorList>
    </citation>
    <scope>NUCLEOTIDE SEQUENCE [LARGE SCALE GENOMIC DNA]</scope>
    <source>
        <strain>Rowbotham-Bradford</strain>
    </source>
</reference>